<gene>
    <name type="primary">ndhF</name>
</gene>
<sequence>MEYTYQYSWIIPFIPLPVPILIGMGLLLFPTATKNHRRVWSFPSILLLSMVMLLSVYLSIQQINRSFIYQYVWSWTINNDFSLEFGHLIDPLASIMLILITTVGILVLFYSDNYMSHDQGYLRFFAYLSFFNTSMLGLVTSSNLIQIYIFWELVGMCSYLLIGFWFTRPIAATACQKAFVTNRVGDFGLLLGILGLYWITGSFEFRDLFEIVNNLIDNNNQVHFLFVTLCSFLLFAGAVAKSAQFPLHVWLPDAMEGPTPISALIHAATMVAAGIFLVARLLPLFVITPYIMNLISLIGIITVLLGATLALAQKDIKRSLAYSTMSQLGYMMLALGMGSYRAALFHLITHAYSKALLFLGSGSIIHSMESIVGYSPDKSQNMVLMGGLKKHVPITKTAFLVGTLSLCGIPPLACFWSKDEILNDSWLYSPIFAIIACSTAGFTAFYMFRVYLLTFDGHLNVHFQNYSGQKSSSVYSISLWGKQVPKRIQNPFCLLNLLTMNNNESTSFFWNNKCKLDGNVKKRIRPFITVTHFPNRKTFSYPHESDNTMLFSLFVLVLFTLFVAAIGIPFNQEGSDCDILSKLLNPSINLLHQNSNNFTDWYEFVTNASFSVSIALLGIFIATFLYKPIYSSLQNFNLLNSFYKRSANRVMWDKIQNWIYDWSYNRGYIDSFYTISLTGGIRGLAELSHFFDRRVIDGILNGFGLTSFFLGESLKYFGGGRISSYLLLYSIFIFIFLLMDSFFTNLPFFVLCQFLDSSFSMSISGFLLYENF</sequence>
<reference key="1">
    <citation type="journal article" date="2008" name="Nucleic Acids Res.">
        <title>The complete nucleotide sequences of the five genetically distinct plastid genomes of Oenothera, subsection Oenothera: I. Sequence evaluation and plastome evolution.</title>
        <authorList>
            <person name="Greiner S."/>
            <person name="Wang X."/>
            <person name="Rauwolf U."/>
            <person name="Silber M.V."/>
            <person name="Mayer K."/>
            <person name="Meurer J."/>
            <person name="Haberer G."/>
            <person name="Herrmann R.G."/>
        </authorList>
    </citation>
    <scope>NUCLEOTIDE SEQUENCE [LARGE SCALE GENOMIC DNA]</scope>
    <source>
        <strain>cv. Suaveolens Grado</strain>
    </source>
</reference>
<evidence type="ECO:0000250" key="1"/>
<evidence type="ECO:0000255" key="2"/>
<evidence type="ECO:0000305" key="3"/>
<name>NU5C_OENBI</name>
<accession>B0Z506</accession>
<proteinExistence type="inferred from homology"/>
<feature type="chain" id="PRO_0000360958" description="NAD(P)H-quinone oxidoreductase subunit 5, chloroplastic">
    <location>
        <begin position="1"/>
        <end position="772"/>
    </location>
</feature>
<feature type="transmembrane region" description="Helical" evidence="2">
    <location>
        <begin position="9"/>
        <end position="29"/>
    </location>
</feature>
<feature type="transmembrane region" description="Helical" evidence="2">
    <location>
        <begin position="40"/>
        <end position="60"/>
    </location>
</feature>
<feature type="transmembrane region" description="Helical" evidence="2">
    <location>
        <begin position="89"/>
        <end position="109"/>
    </location>
</feature>
<feature type="transmembrane region" description="Helical" evidence="2">
    <location>
        <begin position="125"/>
        <end position="145"/>
    </location>
</feature>
<feature type="transmembrane region" description="Helical" evidence="2">
    <location>
        <begin position="147"/>
        <end position="167"/>
    </location>
</feature>
<feature type="transmembrane region" description="Helical" evidence="2">
    <location>
        <begin position="185"/>
        <end position="205"/>
    </location>
</feature>
<feature type="transmembrane region" description="Helical" evidence="2">
    <location>
        <begin position="220"/>
        <end position="240"/>
    </location>
</feature>
<feature type="transmembrane region" description="Helical" evidence="2">
    <location>
        <begin position="259"/>
        <end position="279"/>
    </location>
</feature>
<feature type="transmembrane region" description="Helical" evidence="2">
    <location>
        <begin position="290"/>
        <end position="312"/>
    </location>
</feature>
<feature type="transmembrane region" description="Helical" evidence="2">
    <location>
        <begin position="328"/>
        <end position="348"/>
    </location>
</feature>
<feature type="transmembrane region" description="Helical" evidence="2">
    <location>
        <begin position="355"/>
        <end position="375"/>
    </location>
</feature>
<feature type="transmembrane region" description="Helical" evidence="2">
    <location>
        <begin position="397"/>
        <end position="417"/>
    </location>
</feature>
<feature type="transmembrane region" description="Helical" evidence="2">
    <location>
        <begin position="426"/>
        <end position="446"/>
    </location>
</feature>
<feature type="transmembrane region" description="Helical" evidence="2">
    <location>
        <begin position="550"/>
        <end position="570"/>
    </location>
</feature>
<feature type="transmembrane region" description="Helical" evidence="2">
    <location>
        <begin position="604"/>
        <end position="624"/>
    </location>
</feature>
<feature type="transmembrane region" description="Helical" evidence="2">
    <location>
        <begin position="731"/>
        <end position="751"/>
    </location>
</feature>
<protein>
    <recommendedName>
        <fullName>NAD(P)H-quinone oxidoreductase subunit 5, chloroplastic</fullName>
        <ecNumber>7.1.1.-</ecNumber>
    </recommendedName>
    <alternativeName>
        <fullName>NAD(P)H dehydrogenase subunit 5</fullName>
    </alternativeName>
    <alternativeName>
        <fullName>NADH-plastoquinone oxidoreductase subunit 5</fullName>
    </alternativeName>
</protein>
<comment type="function">
    <text evidence="1">NDH shuttles electrons from NAD(P)H:plastoquinone, via FMN and iron-sulfur (Fe-S) centers, to quinones in the photosynthetic chain and possibly in a chloroplast respiratory chain. The immediate electron acceptor for the enzyme in this species is believed to be plastoquinone. Couples the redox reaction to proton translocation, and thus conserves the redox energy in a proton gradient (By similarity).</text>
</comment>
<comment type="catalytic activity">
    <reaction>
        <text>a plastoquinone + NADH + (n+1) H(+)(in) = a plastoquinol + NAD(+) + n H(+)(out)</text>
        <dbReference type="Rhea" id="RHEA:42608"/>
        <dbReference type="Rhea" id="RHEA-COMP:9561"/>
        <dbReference type="Rhea" id="RHEA-COMP:9562"/>
        <dbReference type="ChEBI" id="CHEBI:15378"/>
        <dbReference type="ChEBI" id="CHEBI:17757"/>
        <dbReference type="ChEBI" id="CHEBI:57540"/>
        <dbReference type="ChEBI" id="CHEBI:57945"/>
        <dbReference type="ChEBI" id="CHEBI:62192"/>
    </reaction>
</comment>
<comment type="catalytic activity">
    <reaction>
        <text>a plastoquinone + NADPH + (n+1) H(+)(in) = a plastoquinol + NADP(+) + n H(+)(out)</text>
        <dbReference type="Rhea" id="RHEA:42612"/>
        <dbReference type="Rhea" id="RHEA-COMP:9561"/>
        <dbReference type="Rhea" id="RHEA-COMP:9562"/>
        <dbReference type="ChEBI" id="CHEBI:15378"/>
        <dbReference type="ChEBI" id="CHEBI:17757"/>
        <dbReference type="ChEBI" id="CHEBI:57783"/>
        <dbReference type="ChEBI" id="CHEBI:58349"/>
        <dbReference type="ChEBI" id="CHEBI:62192"/>
    </reaction>
</comment>
<comment type="subunit">
    <text evidence="1">NDH is composed of at least 16 different subunits, 5 of which are encoded in the nucleus.</text>
</comment>
<comment type="subcellular location">
    <subcellularLocation>
        <location evidence="1">Plastid</location>
        <location evidence="1">Chloroplast thylakoid membrane</location>
        <topology evidence="1">Multi-pass membrane protein</topology>
    </subcellularLocation>
</comment>
<comment type="similarity">
    <text evidence="3">Belongs to the complex I subunit 5 family.</text>
</comment>
<dbReference type="EC" id="7.1.1.-"/>
<dbReference type="EMBL" id="EU262889">
    <property type="protein sequence ID" value="ABW98918.1"/>
    <property type="molecule type" value="Genomic_DNA"/>
</dbReference>
<dbReference type="RefSeq" id="YP_001687413.1">
    <property type="nucleotide sequence ID" value="NC_010361.1"/>
</dbReference>
<dbReference type="SMR" id="B0Z506"/>
<dbReference type="GeneID" id="5952072"/>
<dbReference type="GO" id="GO:0009535">
    <property type="term" value="C:chloroplast thylakoid membrane"/>
    <property type="evidence" value="ECO:0007669"/>
    <property type="project" value="UniProtKB-SubCell"/>
</dbReference>
<dbReference type="GO" id="GO:0008137">
    <property type="term" value="F:NADH dehydrogenase (ubiquinone) activity"/>
    <property type="evidence" value="ECO:0007669"/>
    <property type="project" value="InterPro"/>
</dbReference>
<dbReference type="GO" id="GO:0048038">
    <property type="term" value="F:quinone binding"/>
    <property type="evidence" value="ECO:0007669"/>
    <property type="project" value="UniProtKB-KW"/>
</dbReference>
<dbReference type="GO" id="GO:0042773">
    <property type="term" value="P:ATP synthesis coupled electron transport"/>
    <property type="evidence" value="ECO:0007669"/>
    <property type="project" value="InterPro"/>
</dbReference>
<dbReference type="GO" id="GO:0015990">
    <property type="term" value="P:electron transport coupled proton transport"/>
    <property type="evidence" value="ECO:0007669"/>
    <property type="project" value="TreeGrafter"/>
</dbReference>
<dbReference type="Gene3D" id="1.20.5.2700">
    <property type="match status" value="1"/>
</dbReference>
<dbReference type="InterPro" id="IPR002128">
    <property type="entry name" value="NADH_UbQ_OxRdtase_chlpt_su5_C"/>
</dbReference>
<dbReference type="InterPro" id="IPR018393">
    <property type="entry name" value="NADHpl_OxRdtase_5_subgr"/>
</dbReference>
<dbReference type="InterPro" id="IPR001750">
    <property type="entry name" value="ND/Mrp_TM"/>
</dbReference>
<dbReference type="InterPro" id="IPR003945">
    <property type="entry name" value="NU5C-like"/>
</dbReference>
<dbReference type="InterPro" id="IPR001516">
    <property type="entry name" value="Proton_antipo_N"/>
</dbReference>
<dbReference type="NCBIfam" id="TIGR01974">
    <property type="entry name" value="NDH_I_L"/>
    <property type="match status" value="1"/>
</dbReference>
<dbReference type="NCBIfam" id="NF005141">
    <property type="entry name" value="PRK06590.1"/>
    <property type="match status" value="1"/>
</dbReference>
<dbReference type="PANTHER" id="PTHR42829">
    <property type="entry name" value="NADH-UBIQUINONE OXIDOREDUCTASE CHAIN 5"/>
    <property type="match status" value="1"/>
</dbReference>
<dbReference type="PANTHER" id="PTHR42829:SF2">
    <property type="entry name" value="NADH-UBIQUINONE OXIDOREDUCTASE CHAIN 5"/>
    <property type="match status" value="1"/>
</dbReference>
<dbReference type="Pfam" id="PF01010">
    <property type="entry name" value="Proton_antipo_C"/>
    <property type="match status" value="1"/>
</dbReference>
<dbReference type="Pfam" id="PF00361">
    <property type="entry name" value="Proton_antipo_M"/>
    <property type="match status" value="1"/>
</dbReference>
<dbReference type="Pfam" id="PF00662">
    <property type="entry name" value="Proton_antipo_N"/>
    <property type="match status" value="1"/>
</dbReference>
<dbReference type="PRINTS" id="PR01434">
    <property type="entry name" value="NADHDHGNASE5"/>
</dbReference>
<dbReference type="PRINTS" id="PR01435">
    <property type="entry name" value="NPOXDRDTASE5"/>
</dbReference>
<keyword id="KW-0150">Chloroplast</keyword>
<keyword id="KW-0472">Membrane</keyword>
<keyword id="KW-0520">NAD</keyword>
<keyword id="KW-0521">NADP</keyword>
<keyword id="KW-0934">Plastid</keyword>
<keyword id="KW-0618">Plastoquinone</keyword>
<keyword id="KW-0874">Quinone</keyword>
<keyword id="KW-0793">Thylakoid</keyword>
<keyword id="KW-1278">Translocase</keyword>
<keyword id="KW-0812">Transmembrane</keyword>
<keyword id="KW-1133">Transmembrane helix</keyword>
<keyword id="KW-0813">Transport</keyword>
<geneLocation type="chloroplast"/>
<organism>
    <name type="scientific">Oenothera biennis</name>
    <name type="common">German evening primrose</name>
    <name type="synonym">Onagra biennis</name>
    <dbReference type="NCBI Taxonomy" id="3942"/>
    <lineage>
        <taxon>Eukaryota</taxon>
        <taxon>Viridiplantae</taxon>
        <taxon>Streptophyta</taxon>
        <taxon>Embryophyta</taxon>
        <taxon>Tracheophyta</taxon>
        <taxon>Spermatophyta</taxon>
        <taxon>Magnoliopsida</taxon>
        <taxon>eudicotyledons</taxon>
        <taxon>Gunneridae</taxon>
        <taxon>Pentapetalae</taxon>
        <taxon>rosids</taxon>
        <taxon>malvids</taxon>
        <taxon>Myrtales</taxon>
        <taxon>Onagraceae</taxon>
        <taxon>Onagroideae</taxon>
        <taxon>Onagreae</taxon>
        <taxon>Oenothera</taxon>
    </lineage>
</organism>